<protein>
    <recommendedName>
        <fullName evidence="1">Large ribosomal subunit protein uL5</fullName>
    </recommendedName>
    <alternativeName>
        <fullName evidence="2">50S ribosomal protein L5</fullName>
    </alternativeName>
</protein>
<proteinExistence type="inferred from homology"/>
<comment type="function">
    <text evidence="1">This is one of the proteins that bind and probably mediate the attachment of the 5S RNA into the large ribosomal subunit, where it forms part of the central protuberance. In the 70S ribosome it contacts protein S13 of the 30S subunit (bridge B1b), connecting the 2 subunits; this bridge is implicated in subunit movement. Contacts the P site tRNA; the 5S rRNA and some of its associated proteins might help stabilize positioning of ribosome-bound tRNAs.</text>
</comment>
<comment type="subunit">
    <text evidence="1">Part of the 50S ribosomal subunit; part of the 5S rRNA/L5/L18/L25 subcomplex. Contacts the 5S rRNA and the P site tRNA. Forms a bridge to the 30S subunit in the 70S ribosome.</text>
</comment>
<comment type="similarity">
    <text evidence="1">Belongs to the universal ribosomal protein uL5 family.</text>
</comment>
<keyword id="KW-0687">Ribonucleoprotein</keyword>
<keyword id="KW-0689">Ribosomal protein</keyword>
<keyword id="KW-0694">RNA-binding</keyword>
<keyword id="KW-0699">rRNA-binding</keyword>
<keyword id="KW-0820">tRNA-binding</keyword>
<sequence length="179" mass="20267">MNRLKEKFNTEVTENLMKKFNYSSVMEVPKIDKIVVNMGVGDAVQNSKVLDNAVEELELITGQKPLVTKAKKSIATFRLREGMPIGAKVTLRGERMYEFLDKLISVSLPRVRDFQGVSKKAFDGRGNYTLGVKEQLIFPEIDYDKVSKVRGMDIVIVTTANTDEEARELLANFGMPFRK</sequence>
<accession>A8Z345</accession>
<reference key="1">
    <citation type="journal article" date="2007" name="BMC Microbiol.">
        <title>Subtle genetic changes enhance virulence of methicillin resistant and sensitive Staphylococcus aureus.</title>
        <authorList>
            <person name="Highlander S.K."/>
            <person name="Hulten K.G."/>
            <person name="Qin X."/>
            <person name="Jiang H."/>
            <person name="Yerrapragada S."/>
            <person name="Mason E.O. Jr."/>
            <person name="Shang Y."/>
            <person name="Williams T.M."/>
            <person name="Fortunov R.M."/>
            <person name="Liu Y."/>
            <person name="Igboeli O."/>
            <person name="Petrosino J."/>
            <person name="Tirumalai M."/>
            <person name="Uzman A."/>
            <person name="Fox G.E."/>
            <person name="Cardenas A.M."/>
            <person name="Muzny D.M."/>
            <person name="Hemphill L."/>
            <person name="Ding Y."/>
            <person name="Dugan S."/>
            <person name="Blyth P.R."/>
            <person name="Buhay C.J."/>
            <person name="Dinh H.H."/>
            <person name="Hawes A.C."/>
            <person name="Holder M."/>
            <person name="Kovar C.L."/>
            <person name="Lee S.L."/>
            <person name="Liu W."/>
            <person name="Nazareth L.V."/>
            <person name="Wang Q."/>
            <person name="Zhou J."/>
            <person name="Kaplan S.L."/>
            <person name="Weinstock G.M."/>
        </authorList>
    </citation>
    <scope>NUCLEOTIDE SEQUENCE [LARGE SCALE GENOMIC DNA]</scope>
    <source>
        <strain>USA300 / TCH1516</strain>
    </source>
</reference>
<name>RL5_STAAT</name>
<gene>
    <name evidence="1" type="primary">rplE</name>
    <name type="ordered locus">USA300HOU_2229</name>
</gene>
<evidence type="ECO:0000255" key="1">
    <source>
        <dbReference type="HAMAP-Rule" id="MF_01333"/>
    </source>
</evidence>
<evidence type="ECO:0000305" key="2"/>
<dbReference type="EMBL" id="CP000730">
    <property type="protein sequence ID" value="ABX30222.1"/>
    <property type="molecule type" value="Genomic_DNA"/>
</dbReference>
<dbReference type="RefSeq" id="WP_001080824.1">
    <property type="nucleotide sequence ID" value="NC_010079.1"/>
</dbReference>
<dbReference type="SMR" id="A8Z345"/>
<dbReference type="KEGG" id="sax:USA300HOU_2229"/>
<dbReference type="HOGENOM" id="CLU_061015_2_1_9"/>
<dbReference type="GO" id="GO:1990904">
    <property type="term" value="C:ribonucleoprotein complex"/>
    <property type="evidence" value="ECO:0007669"/>
    <property type="project" value="UniProtKB-KW"/>
</dbReference>
<dbReference type="GO" id="GO:0005840">
    <property type="term" value="C:ribosome"/>
    <property type="evidence" value="ECO:0007669"/>
    <property type="project" value="UniProtKB-KW"/>
</dbReference>
<dbReference type="GO" id="GO:0019843">
    <property type="term" value="F:rRNA binding"/>
    <property type="evidence" value="ECO:0007669"/>
    <property type="project" value="UniProtKB-UniRule"/>
</dbReference>
<dbReference type="GO" id="GO:0003735">
    <property type="term" value="F:structural constituent of ribosome"/>
    <property type="evidence" value="ECO:0007669"/>
    <property type="project" value="InterPro"/>
</dbReference>
<dbReference type="GO" id="GO:0000049">
    <property type="term" value="F:tRNA binding"/>
    <property type="evidence" value="ECO:0007669"/>
    <property type="project" value="UniProtKB-UniRule"/>
</dbReference>
<dbReference type="GO" id="GO:0006412">
    <property type="term" value="P:translation"/>
    <property type="evidence" value="ECO:0007669"/>
    <property type="project" value="UniProtKB-UniRule"/>
</dbReference>
<dbReference type="FunFam" id="3.30.1440.10:FF:000001">
    <property type="entry name" value="50S ribosomal protein L5"/>
    <property type="match status" value="1"/>
</dbReference>
<dbReference type="Gene3D" id="3.30.1440.10">
    <property type="match status" value="1"/>
</dbReference>
<dbReference type="HAMAP" id="MF_01333_B">
    <property type="entry name" value="Ribosomal_uL5_B"/>
    <property type="match status" value="1"/>
</dbReference>
<dbReference type="InterPro" id="IPR002132">
    <property type="entry name" value="Ribosomal_uL5"/>
</dbReference>
<dbReference type="InterPro" id="IPR020930">
    <property type="entry name" value="Ribosomal_uL5_bac-type"/>
</dbReference>
<dbReference type="InterPro" id="IPR031309">
    <property type="entry name" value="Ribosomal_uL5_C"/>
</dbReference>
<dbReference type="InterPro" id="IPR020929">
    <property type="entry name" value="Ribosomal_uL5_CS"/>
</dbReference>
<dbReference type="InterPro" id="IPR022803">
    <property type="entry name" value="Ribosomal_uL5_dom_sf"/>
</dbReference>
<dbReference type="InterPro" id="IPR031310">
    <property type="entry name" value="Ribosomal_uL5_N"/>
</dbReference>
<dbReference type="NCBIfam" id="NF000585">
    <property type="entry name" value="PRK00010.1"/>
    <property type="match status" value="1"/>
</dbReference>
<dbReference type="PANTHER" id="PTHR11994">
    <property type="entry name" value="60S RIBOSOMAL PROTEIN L11-RELATED"/>
    <property type="match status" value="1"/>
</dbReference>
<dbReference type="Pfam" id="PF00281">
    <property type="entry name" value="Ribosomal_L5"/>
    <property type="match status" value="1"/>
</dbReference>
<dbReference type="Pfam" id="PF00673">
    <property type="entry name" value="Ribosomal_L5_C"/>
    <property type="match status" value="1"/>
</dbReference>
<dbReference type="PIRSF" id="PIRSF002161">
    <property type="entry name" value="Ribosomal_L5"/>
    <property type="match status" value="1"/>
</dbReference>
<dbReference type="SUPFAM" id="SSF55282">
    <property type="entry name" value="RL5-like"/>
    <property type="match status" value="1"/>
</dbReference>
<dbReference type="PROSITE" id="PS00358">
    <property type="entry name" value="RIBOSOMAL_L5"/>
    <property type="match status" value="1"/>
</dbReference>
<feature type="chain" id="PRO_1000086613" description="Large ribosomal subunit protein uL5">
    <location>
        <begin position="1"/>
        <end position="179"/>
    </location>
</feature>
<organism>
    <name type="scientific">Staphylococcus aureus (strain USA300 / TCH1516)</name>
    <dbReference type="NCBI Taxonomy" id="451516"/>
    <lineage>
        <taxon>Bacteria</taxon>
        <taxon>Bacillati</taxon>
        <taxon>Bacillota</taxon>
        <taxon>Bacilli</taxon>
        <taxon>Bacillales</taxon>
        <taxon>Staphylococcaceae</taxon>
        <taxon>Staphylococcus</taxon>
    </lineage>
</organism>